<sequence length="190" mass="21997">MRNMHTNRRSPGPITSAATQRRLKPEPEPTVKKFIKIILLSRIIEKMMKVPARFVRFGPKLTDNVTLQTPVGFKRSIRIKRIGDEVWFEKGWSEFAEAHSLSDGHFLFFHYEGDSCFRVVIFDVSASEIEYPLDDTDDNREEVMDDDEQGFTGFESSDDDGEVVDMDELLKKKKKKPRVNIKSENVIILD</sequence>
<name>Y1475_ARATH</name>
<organism>
    <name type="scientific">Arabidopsis thaliana</name>
    <name type="common">Mouse-ear cress</name>
    <dbReference type="NCBI Taxonomy" id="3702"/>
    <lineage>
        <taxon>Eukaryota</taxon>
        <taxon>Viridiplantae</taxon>
        <taxon>Streptophyta</taxon>
        <taxon>Embryophyta</taxon>
        <taxon>Tracheophyta</taxon>
        <taxon>Spermatophyta</taxon>
        <taxon>Magnoliopsida</taxon>
        <taxon>eudicotyledons</taxon>
        <taxon>Gunneridae</taxon>
        <taxon>Pentapetalae</taxon>
        <taxon>rosids</taxon>
        <taxon>malvids</taxon>
        <taxon>Brassicales</taxon>
        <taxon>Brassicaceae</taxon>
        <taxon>Camelineae</taxon>
        <taxon>Arabidopsis</taxon>
    </lineage>
</organism>
<dbReference type="EMBL" id="AC007504">
    <property type="protein sequence ID" value="AAD43154.1"/>
    <property type="status" value="ALT_SEQ"/>
    <property type="molecule type" value="Genomic_DNA"/>
</dbReference>
<dbReference type="EMBL" id="CP002684">
    <property type="protein sequence ID" value="AEE32433.1"/>
    <property type="molecule type" value="Genomic_DNA"/>
</dbReference>
<dbReference type="EMBL" id="BX817688">
    <property type="status" value="NOT_ANNOTATED_CDS"/>
    <property type="molecule type" value="mRNA"/>
</dbReference>
<dbReference type="PIR" id="D96531">
    <property type="entry name" value="D96531"/>
</dbReference>
<dbReference type="RefSeq" id="NP_683415.2">
    <property type="nucleotide sequence ID" value="NM_148574.4"/>
</dbReference>
<dbReference type="SMR" id="Q9XIB4"/>
<dbReference type="BioGRID" id="26596">
    <property type="interactions" value="4"/>
</dbReference>
<dbReference type="FunCoup" id="Q9XIB4">
    <property type="interactions" value="68"/>
</dbReference>
<dbReference type="IntAct" id="Q9XIB4">
    <property type="interactions" value="4"/>
</dbReference>
<dbReference type="STRING" id="3702.Q9XIB4"/>
<dbReference type="iPTMnet" id="Q9XIB4"/>
<dbReference type="PaxDb" id="3702-AT1G49475.1"/>
<dbReference type="EnsemblPlants" id="AT1G49475.1">
    <property type="protein sequence ID" value="AT1G49475.1"/>
    <property type="gene ID" value="AT1G49475"/>
</dbReference>
<dbReference type="GeneID" id="841371"/>
<dbReference type="Gramene" id="AT1G49475.1">
    <property type="protein sequence ID" value="AT1G49475.1"/>
    <property type="gene ID" value="AT1G49475"/>
</dbReference>
<dbReference type="KEGG" id="ath:AT1G49475"/>
<dbReference type="Araport" id="AT1G49475"/>
<dbReference type="TAIR" id="AT1G49475"/>
<dbReference type="HOGENOM" id="CLU_112195_0_0_1"/>
<dbReference type="InParanoid" id="Q9XIB4"/>
<dbReference type="OMA" id="EGHFLYF"/>
<dbReference type="PhylomeDB" id="Q9XIB4"/>
<dbReference type="PRO" id="PR:Q9XIB4"/>
<dbReference type="Proteomes" id="UP000006548">
    <property type="component" value="Chromosome 1"/>
</dbReference>
<dbReference type="ExpressionAtlas" id="Q9XIB4">
    <property type="expression patterns" value="baseline and differential"/>
</dbReference>
<dbReference type="GO" id="GO:0005634">
    <property type="term" value="C:nucleus"/>
    <property type="evidence" value="ECO:0007669"/>
    <property type="project" value="UniProtKB-SubCell"/>
</dbReference>
<dbReference type="GO" id="GO:0003677">
    <property type="term" value="F:DNA binding"/>
    <property type="evidence" value="ECO:0007669"/>
    <property type="project" value="UniProtKB-KW"/>
</dbReference>
<dbReference type="CDD" id="cd10017">
    <property type="entry name" value="B3_DNA"/>
    <property type="match status" value="1"/>
</dbReference>
<dbReference type="Gene3D" id="2.40.330.10">
    <property type="entry name" value="DNA-binding pseudobarrel domain"/>
    <property type="match status" value="1"/>
</dbReference>
<dbReference type="InterPro" id="IPR003340">
    <property type="entry name" value="B3_DNA-bd"/>
</dbReference>
<dbReference type="InterPro" id="IPR015300">
    <property type="entry name" value="DNA-bd_pseudobarrel_sf"/>
</dbReference>
<dbReference type="InterPro" id="IPR050655">
    <property type="entry name" value="Plant_B3_domain"/>
</dbReference>
<dbReference type="PANTHER" id="PTHR31920">
    <property type="entry name" value="B3 DOMAIN-CONTAINING"/>
    <property type="match status" value="1"/>
</dbReference>
<dbReference type="PANTHER" id="PTHR31920:SF37">
    <property type="entry name" value="B3 DOMAIN-CONTAINING TRANSCRIPTION FACTOR VRN1"/>
    <property type="match status" value="1"/>
</dbReference>
<dbReference type="Pfam" id="PF02362">
    <property type="entry name" value="B3"/>
    <property type="match status" value="1"/>
</dbReference>
<dbReference type="SMART" id="SM01019">
    <property type="entry name" value="B3"/>
    <property type="match status" value="1"/>
</dbReference>
<dbReference type="SUPFAM" id="SSF101936">
    <property type="entry name" value="DNA-binding pseudobarrel domain"/>
    <property type="match status" value="1"/>
</dbReference>
<dbReference type="PROSITE" id="PS50863">
    <property type="entry name" value="B3"/>
    <property type="match status" value="1"/>
</dbReference>
<keyword id="KW-0238">DNA-binding</keyword>
<keyword id="KW-0539">Nucleus</keyword>
<keyword id="KW-1185">Reference proteome</keyword>
<keyword id="KW-0804">Transcription</keyword>
<keyword id="KW-0805">Transcription regulation</keyword>
<reference key="1">
    <citation type="journal article" date="2000" name="Nature">
        <title>Sequence and analysis of chromosome 1 of the plant Arabidopsis thaliana.</title>
        <authorList>
            <person name="Theologis A."/>
            <person name="Ecker J.R."/>
            <person name="Palm C.J."/>
            <person name="Federspiel N.A."/>
            <person name="Kaul S."/>
            <person name="White O."/>
            <person name="Alonso J."/>
            <person name="Altafi H."/>
            <person name="Araujo R."/>
            <person name="Bowman C.L."/>
            <person name="Brooks S.Y."/>
            <person name="Buehler E."/>
            <person name="Chan A."/>
            <person name="Chao Q."/>
            <person name="Chen H."/>
            <person name="Cheuk R.F."/>
            <person name="Chin C.W."/>
            <person name="Chung M.K."/>
            <person name="Conn L."/>
            <person name="Conway A.B."/>
            <person name="Conway A.R."/>
            <person name="Creasy T.H."/>
            <person name="Dewar K."/>
            <person name="Dunn P."/>
            <person name="Etgu P."/>
            <person name="Feldblyum T.V."/>
            <person name="Feng J.-D."/>
            <person name="Fong B."/>
            <person name="Fujii C.Y."/>
            <person name="Gill J.E."/>
            <person name="Goldsmith A.D."/>
            <person name="Haas B."/>
            <person name="Hansen N.F."/>
            <person name="Hughes B."/>
            <person name="Huizar L."/>
            <person name="Hunter J.L."/>
            <person name="Jenkins J."/>
            <person name="Johnson-Hopson C."/>
            <person name="Khan S."/>
            <person name="Khaykin E."/>
            <person name="Kim C.J."/>
            <person name="Koo H.L."/>
            <person name="Kremenetskaia I."/>
            <person name="Kurtz D.B."/>
            <person name="Kwan A."/>
            <person name="Lam B."/>
            <person name="Langin-Hooper S."/>
            <person name="Lee A."/>
            <person name="Lee J.M."/>
            <person name="Lenz C.A."/>
            <person name="Li J.H."/>
            <person name="Li Y.-P."/>
            <person name="Lin X."/>
            <person name="Liu S.X."/>
            <person name="Liu Z.A."/>
            <person name="Luros J.S."/>
            <person name="Maiti R."/>
            <person name="Marziali A."/>
            <person name="Militscher J."/>
            <person name="Miranda M."/>
            <person name="Nguyen M."/>
            <person name="Nierman W.C."/>
            <person name="Osborne B.I."/>
            <person name="Pai G."/>
            <person name="Peterson J."/>
            <person name="Pham P.K."/>
            <person name="Rizzo M."/>
            <person name="Rooney T."/>
            <person name="Rowley D."/>
            <person name="Sakano H."/>
            <person name="Salzberg S.L."/>
            <person name="Schwartz J.R."/>
            <person name="Shinn P."/>
            <person name="Southwick A.M."/>
            <person name="Sun H."/>
            <person name="Tallon L.J."/>
            <person name="Tambunga G."/>
            <person name="Toriumi M.J."/>
            <person name="Town C.D."/>
            <person name="Utterback T."/>
            <person name="Van Aken S."/>
            <person name="Vaysberg M."/>
            <person name="Vysotskaia V.S."/>
            <person name="Walker M."/>
            <person name="Wu D."/>
            <person name="Yu G."/>
            <person name="Fraser C.M."/>
            <person name="Venter J.C."/>
            <person name="Davis R.W."/>
        </authorList>
    </citation>
    <scope>NUCLEOTIDE SEQUENCE [LARGE SCALE GENOMIC DNA]</scope>
    <source>
        <strain>cv. Columbia</strain>
    </source>
</reference>
<reference key="2">
    <citation type="journal article" date="2017" name="Plant J.">
        <title>Araport11: a complete reannotation of the Arabidopsis thaliana reference genome.</title>
        <authorList>
            <person name="Cheng C.Y."/>
            <person name="Krishnakumar V."/>
            <person name="Chan A.P."/>
            <person name="Thibaud-Nissen F."/>
            <person name="Schobel S."/>
            <person name="Town C.D."/>
        </authorList>
    </citation>
    <scope>GENOME REANNOTATION</scope>
    <source>
        <strain>cv. Columbia</strain>
    </source>
</reference>
<reference key="3">
    <citation type="journal article" date="2004" name="Genome Res.">
        <title>Whole genome sequence comparisons and 'full-length' cDNA sequences: a combined approach to evaluate and improve Arabidopsis genome annotation.</title>
        <authorList>
            <person name="Castelli V."/>
            <person name="Aury J.-M."/>
            <person name="Jaillon O."/>
            <person name="Wincker P."/>
            <person name="Clepet C."/>
            <person name="Menard M."/>
            <person name="Cruaud C."/>
            <person name="Quetier F."/>
            <person name="Scarpelli C."/>
            <person name="Schaechter V."/>
            <person name="Temple G."/>
            <person name="Caboche M."/>
            <person name="Weissenbach J."/>
            <person name="Salanoubat M."/>
        </authorList>
    </citation>
    <scope>NUCLEOTIDE SEQUENCE [LARGE SCALE MRNA] OF 5-190</scope>
    <source>
        <strain>cv. Columbia</strain>
    </source>
</reference>
<reference key="4">
    <citation type="journal article" date="2008" name="Trends Plant Sci.">
        <title>The plant B3 superfamily.</title>
        <authorList>
            <person name="Swaminathan K."/>
            <person name="Peterson K."/>
            <person name="Jack T."/>
        </authorList>
    </citation>
    <scope>GENE FAMILY</scope>
</reference>
<evidence type="ECO:0000255" key="1">
    <source>
        <dbReference type="PROSITE-ProRule" id="PRU00326"/>
    </source>
</evidence>
<evidence type="ECO:0000256" key="2">
    <source>
        <dbReference type="SAM" id="MobiDB-lite"/>
    </source>
</evidence>
<evidence type="ECO:0000305" key="3"/>
<protein>
    <recommendedName>
        <fullName>B3 domain-containing protein At1g49475</fullName>
    </recommendedName>
</protein>
<proteinExistence type="evidence at transcript level"/>
<accession>Q9XIB4</accession>
<feature type="chain" id="PRO_0000375124" description="B3 domain-containing protein At1g49475">
    <location>
        <begin position="1"/>
        <end position="190"/>
    </location>
</feature>
<feature type="DNA-binding region" description="TF-B3" evidence="1">
    <location>
        <begin position="33"/>
        <end position="125"/>
    </location>
</feature>
<feature type="region of interest" description="Disordered" evidence="2">
    <location>
        <begin position="1"/>
        <end position="27"/>
    </location>
</feature>
<gene>
    <name type="ordered locus">At1g49475</name>
    <name type="ORF">F13F21.9</name>
</gene>
<comment type="subcellular location">
    <subcellularLocation>
        <location evidence="1">Nucleus</location>
    </subcellularLocation>
</comment>
<comment type="sequence caution" evidence="3">
    <conflict type="erroneous gene model prediction">
        <sequence resource="EMBL-CDS" id="AAD43154"/>
    </conflict>
</comment>